<dbReference type="EMBL" id="AM039952">
    <property type="protein sequence ID" value="CAJ22773.1"/>
    <property type="molecule type" value="Genomic_DNA"/>
</dbReference>
<dbReference type="RefSeq" id="WP_003483870.1">
    <property type="nucleotide sequence ID" value="NZ_CP017190.1"/>
</dbReference>
<dbReference type="SMR" id="Q3BWJ0"/>
<dbReference type="STRING" id="456327.BJD11_16945"/>
<dbReference type="GeneID" id="97509455"/>
<dbReference type="KEGG" id="xcv:XCV1142"/>
<dbReference type="eggNOG" id="COG0333">
    <property type="taxonomic scope" value="Bacteria"/>
</dbReference>
<dbReference type="HOGENOM" id="CLU_129084_2_1_6"/>
<dbReference type="Proteomes" id="UP000007069">
    <property type="component" value="Chromosome"/>
</dbReference>
<dbReference type="GO" id="GO:0015934">
    <property type="term" value="C:large ribosomal subunit"/>
    <property type="evidence" value="ECO:0007669"/>
    <property type="project" value="InterPro"/>
</dbReference>
<dbReference type="GO" id="GO:0003735">
    <property type="term" value="F:structural constituent of ribosome"/>
    <property type="evidence" value="ECO:0007669"/>
    <property type="project" value="InterPro"/>
</dbReference>
<dbReference type="GO" id="GO:0006412">
    <property type="term" value="P:translation"/>
    <property type="evidence" value="ECO:0007669"/>
    <property type="project" value="UniProtKB-UniRule"/>
</dbReference>
<dbReference type="HAMAP" id="MF_00340">
    <property type="entry name" value="Ribosomal_bL32"/>
    <property type="match status" value="1"/>
</dbReference>
<dbReference type="InterPro" id="IPR002677">
    <property type="entry name" value="Ribosomal_bL32"/>
</dbReference>
<dbReference type="InterPro" id="IPR044957">
    <property type="entry name" value="Ribosomal_bL32_bact"/>
</dbReference>
<dbReference type="InterPro" id="IPR011332">
    <property type="entry name" value="Ribosomal_zn-bd"/>
</dbReference>
<dbReference type="NCBIfam" id="TIGR01031">
    <property type="entry name" value="rpmF_bact"/>
    <property type="match status" value="1"/>
</dbReference>
<dbReference type="PANTHER" id="PTHR35534">
    <property type="entry name" value="50S RIBOSOMAL PROTEIN L32"/>
    <property type="match status" value="1"/>
</dbReference>
<dbReference type="PANTHER" id="PTHR35534:SF1">
    <property type="entry name" value="LARGE RIBOSOMAL SUBUNIT PROTEIN BL32"/>
    <property type="match status" value="1"/>
</dbReference>
<dbReference type="Pfam" id="PF01783">
    <property type="entry name" value="Ribosomal_L32p"/>
    <property type="match status" value="1"/>
</dbReference>
<dbReference type="SUPFAM" id="SSF57829">
    <property type="entry name" value="Zn-binding ribosomal proteins"/>
    <property type="match status" value="1"/>
</dbReference>
<sequence length="64" mass="7130">MAVQKSRVTPSRRGQRRSHDALTAKQLSTDPTSGEIHLRHHITADGYYRGKKVIATKSSAVQED</sequence>
<evidence type="ECO:0000255" key="1">
    <source>
        <dbReference type="HAMAP-Rule" id="MF_00340"/>
    </source>
</evidence>
<evidence type="ECO:0000256" key="2">
    <source>
        <dbReference type="SAM" id="MobiDB-lite"/>
    </source>
</evidence>
<evidence type="ECO:0000305" key="3"/>
<accession>Q3BWJ0</accession>
<reference key="1">
    <citation type="journal article" date="2005" name="J. Bacteriol.">
        <title>Insights into genome plasticity and pathogenicity of the plant pathogenic Bacterium Xanthomonas campestris pv. vesicatoria revealed by the complete genome sequence.</title>
        <authorList>
            <person name="Thieme F."/>
            <person name="Koebnik R."/>
            <person name="Bekel T."/>
            <person name="Berger C."/>
            <person name="Boch J."/>
            <person name="Buettner D."/>
            <person name="Caldana C."/>
            <person name="Gaigalat L."/>
            <person name="Goesmann A."/>
            <person name="Kay S."/>
            <person name="Kirchner O."/>
            <person name="Lanz C."/>
            <person name="Linke B."/>
            <person name="McHardy A.C."/>
            <person name="Meyer F."/>
            <person name="Mittenhuber G."/>
            <person name="Nies D.H."/>
            <person name="Niesbach-Kloesgen U."/>
            <person name="Patschkowski T."/>
            <person name="Rueckert C."/>
            <person name="Rupp O."/>
            <person name="Schneiker S."/>
            <person name="Schuster S.C."/>
            <person name="Vorhoelter F.J."/>
            <person name="Weber E."/>
            <person name="Puehler A."/>
            <person name="Bonas U."/>
            <person name="Bartels D."/>
            <person name="Kaiser O."/>
        </authorList>
    </citation>
    <scope>NUCLEOTIDE SEQUENCE [LARGE SCALE GENOMIC DNA]</scope>
    <source>
        <strain>85-10</strain>
    </source>
</reference>
<feature type="chain" id="PRO_0000225779" description="Large ribosomal subunit protein bL32">
    <location>
        <begin position="1"/>
        <end position="64"/>
    </location>
</feature>
<feature type="region of interest" description="Disordered" evidence="2">
    <location>
        <begin position="1"/>
        <end position="35"/>
    </location>
</feature>
<protein>
    <recommendedName>
        <fullName evidence="1">Large ribosomal subunit protein bL32</fullName>
    </recommendedName>
    <alternativeName>
        <fullName evidence="3">50S ribosomal protein L32</fullName>
    </alternativeName>
</protein>
<gene>
    <name evidence="1" type="primary">rpmF</name>
    <name type="ordered locus">XCV1142</name>
</gene>
<organism>
    <name type="scientific">Xanthomonas euvesicatoria pv. vesicatoria (strain 85-10)</name>
    <name type="common">Xanthomonas campestris pv. vesicatoria</name>
    <dbReference type="NCBI Taxonomy" id="316273"/>
    <lineage>
        <taxon>Bacteria</taxon>
        <taxon>Pseudomonadati</taxon>
        <taxon>Pseudomonadota</taxon>
        <taxon>Gammaproteobacteria</taxon>
        <taxon>Lysobacterales</taxon>
        <taxon>Lysobacteraceae</taxon>
        <taxon>Xanthomonas</taxon>
    </lineage>
</organism>
<comment type="similarity">
    <text evidence="1">Belongs to the bacterial ribosomal protein bL32 family.</text>
</comment>
<keyword id="KW-0687">Ribonucleoprotein</keyword>
<keyword id="KW-0689">Ribosomal protein</keyword>
<name>RL32_XANE5</name>
<proteinExistence type="inferred from homology"/>